<comment type="function">
    <text evidence="1">Plays a central role in 2-thiolation of mcm(5)S(2)U at tRNA wobble positions of tRNA(Lys), tRNA(Glu) and tRNA(Gln). Directly binds tRNAs and probably acts by catalyzing adenylation of tRNAs, an intermediate required for 2-thiolation. It is unclear whether it acts as a sulfurtransferase that transfers sulfur from thiocarboxylated URM1 onto the uridine of tRNAs at wobble position.</text>
</comment>
<comment type="pathway">
    <text evidence="1">tRNA modification; 5-methoxycarbonylmethyl-2-thiouridine-tRNA biosynthesis.</text>
</comment>
<comment type="subcellular location">
    <subcellularLocation>
        <location evidence="1">Cytoplasm</location>
    </subcellularLocation>
</comment>
<comment type="similarity">
    <text evidence="1">Belongs to the TtcA family. CTU1/NCS6/ATPBD3 subfamily.</text>
</comment>
<dbReference type="EC" id="2.7.7.-" evidence="1"/>
<dbReference type="EMBL" id="CH940648">
    <property type="protein sequence ID" value="EDW59922.1"/>
    <property type="molecule type" value="Genomic_DNA"/>
</dbReference>
<dbReference type="SMR" id="B4LM02"/>
<dbReference type="FunCoup" id="B4LM02">
    <property type="interactions" value="435"/>
</dbReference>
<dbReference type="STRING" id="7244.B4LM02"/>
<dbReference type="EnsemblMetazoa" id="FBtr0237128">
    <property type="protein sequence ID" value="FBpp0235620"/>
    <property type="gene ID" value="FBgn0208336"/>
</dbReference>
<dbReference type="EnsemblMetazoa" id="XM_002048693.3">
    <property type="protein sequence ID" value="XP_002048729.1"/>
    <property type="gene ID" value="LOC6626387"/>
</dbReference>
<dbReference type="GeneID" id="6626387"/>
<dbReference type="KEGG" id="dvi:6626387"/>
<dbReference type="CTD" id="90353"/>
<dbReference type="eggNOG" id="KOG2840">
    <property type="taxonomic scope" value="Eukaryota"/>
</dbReference>
<dbReference type="HOGENOM" id="CLU_026481_1_2_1"/>
<dbReference type="InParanoid" id="B4LM02"/>
<dbReference type="OMA" id="KPVRGIC"/>
<dbReference type="OrthoDB" id="198857at2759"/>
<dbReference type="PhylomeDB" id="B4LM02"/>
<dbReference type="UniPathway" id="UPA00988"/>
<dbReference type="Proteomes" id="UP000008792">
    <property type="component" value="Unassembled WGS sequence"/>
</dbReference>
<dbReference type="GO" id="GO:0005829">
    <property type="term" value="C:cytosol"/>
    <property type="evidence" value="ECO:0000250"/>
    <property type="project" value="UniProtKB"/>
</dbReference>
<dbReference type="GO" id="GO:0002144">
    <property type="term" value="C:cytosolic tRNA wobble base thiouridylase complex"/>
    <property type="evidence" value="ECO:0007669"/>
    <property type="project" value="TreeGrafter"/>
</dbReference>
<dbReference type="GO" id="GO:0005739">
    <property type="term" value="C:mitochondrion"/>
    <property type="evidence" value="ECO:0007669"/>
    <property type="project" value="TreeGrafter"/>
</dbReference>
<dbReference type="GO" id="GO:0016779">
    <property type="term" value="F:nucleotidyltransferase activity"/>
    <property type="evidence" value="ECO:0007669"/>
    <property type="project" value="UniProtKB-UniRule"/>
</dbReference>
<dbReference type="GO" id="GO:0000049">
    <property type="term" value="F:tRNA binding"/>
    <property type="evidence" value="ECO:0000250"/>
    <property type="project" value="UniProtKB"/>
</dbReference>
<dbReference type="GO" id="GO:0032447">
    <property type="term" value="P:protein urmylation"/>
    <property type="evidence" value="ECO:0007669"/>
    <property type="project" value="UniProtKB-UniRule"/>
</dbReference>
<dbReference type="GO" id="GO:0034227">
    <property type="term" value="P:tRNA thio-modification"/>
    <property type="evidence" value="ECO:0000250"/>
    <property type="project" value="UniProtKB"/>
</dbReference>
<dbReference type="GO" id="GO:0002143">
    <property type="term" value="P:tRNA wobble position uridine thiolation"/>
    <property type="evidence" value="ECO:0007669"/>
    <property type="project" value="TreeGrafter"/>
</dbReference>
<dbReference type="GO" id="GO:0002098">
    <property type="term" value="P:tRNA wobble uridine modification"/>
    <property type="evidence" value="ECO:0000250"/>
    <property type="project" value="UniProtKB"/>
</dbReference>
<dbReference type="CDD" id="cd01713">
    <property type="entry name" value="CTU1-like"/>
    <property type="match status" value="1"/>
</dbReference>
<dbReference type="FunFam" id="3.40.50.620:FF:000054">
    <property type="entry name" value="Cytoplasmic tRNA 2-thiolation protein 1"/>
    <property type="match status" value="1"/>
</dbReference>
<dbReference type="Gene3D" id="3.40.50.620">
    <property type="entry name" value="HUPs"/>
    <property type="match status" value="1"/>
</dbReference>
<dbReference type="HAMAP" id="MF_03053">
    <property type="entry name" value="CTU1"/>
    <property type="match status" value="1"/>
</dbReference>
<dbReference type="InterPro" id="IPR056369">
    <property type="entry name" value="CTU1-like_ATP-bd"/>
</dbReference>
<dbReference type="InterPro" id="IPR032442">
    <property type="entry name" value="CTU1_C"/>
</dbReference>
<dbReference type="InterPro" id="IPR000541">
    <property type="entry name" value="Ncs6/Tuc1/Ctu1"/>
</dbReference>
<dbReference type="InterPro" id="IPR014729">
    <property type="entry name" value="Rossmann-like_a/b/a_fold"/>
</dbReference>
<dbReference type="InterPro" id="IPR011063">
    <property type="entry name" value="TilS/TtcA_N"/>
</dbReference>
<dbReference type="InterPro" id="IPR035107">
    <property type="entry name" value="tRNA_thiolation_TtcA_Ctu1"/>
</dbReference>
<dbReference type="InterPro" id="IPR020554">
    <property type="entry name" value="UPF0021_CS"/>
</dbReference>
<dbReference type="NCBIfam" id="TIGR00269">
    <property type="entry name" value="TIGR00269 family protein"/>
    <property type="match status" value="1"/>
</dbReference>
<dbReference type="PANTHER" id="PTHR11807">
    <property type="entry name" value="ATPASES OF THE PP SUPERFAMILY-RELATED"/>
    <property type="match status" value="1"/>
</dbReference>
<dbReference type="PANTHER" id="PTHR11807:SF12">
    <property type="entry name" value="CYTOPLASMIC TRNA 2-THIOLATION PROTEIN 1"/>
    <property type="match status" value="1"/>
</dbReference>
<dbReference type="Pfam" id="PF01171">
    <property type="entry name" value="ATP_bind_3"/>
    <property type="match status" value="1"/>
</dbReference>
<dbReference type="Pfam" id="PF16503">
    <property type="entry name" value="zn-ribbon_14"/>
    <property type="match status" value="1"/>
</dbReference>
<dbReference type="PIRSF" id="PIRSF004976">
    <property type="entry name" value="ATPase_YdaO"/>
    <property type="match status" value="1"/>
</dbReference>
<dbReference type="SUPFAM" id="SSF52402">
    <property type="entry name" value="Adenine nucleotide alpha hydrolases-like"/>
    <property type="match status" value="1"/>
</dbReference>
<dbReference type="PROSITE" id="PS01263">
    <property type="entry name" value="UPF0021"/>
    <property type="match status" value="1"/>
</dbReference>
<accession>B4LM02</accession>
<keyword id="KW-0963">Cytoplasm</keyword>
<keyword id="KW-1185">Reference proteome</keyword>
<keyword id="KW-0694">RNA-binding</keyword>
<keyword id="KW-0808">Transferase</keyword>
<keyword id="KW-0819">tRNA processing</keyword>
<keyword id="KW-0820">tRNA-binding</keyword>
<feature type="chain" id="PRO_0000368245" description="Cytoplasmic tRNA 2-thiolation protein 1">
    <location>
        <begin position="1"/>
        <end position="343"/>
    </location>
</feature>
<sequence>MPIDCKAKCGNRATLKRPKTGDALCKACFFAAFEAEIHHTIISSKLFRRGEKVAVAASGGKDSTVLAHVLKLLNERHDYGLDLVLLSIDEGITGYRDDSLETVKQNRDDYQMPLKILSYEELYGWTMDRIVAQIGRSNNCTFCGVFRRQALDRGAKLLGVDSIATGHNADDIAETVLMNILRGDTARLRRCTDIRTGGSEDSIPRVKPLKYSYEKEIVMYAHYKKLVYFSTECVFAPNAYRGHARAFLKDLEKVRPSVIMDIIYSGEQLRFKDTVKKPVRGICERCSFVSSQQPCKACVLLEGLNRGLPKLGIGKKSKGDRMIAKQNQELALRERANIVKNDF</sequence>
<organism>
    <name type="scientific">Drosophila virilis</name>
    <name type="common">Fruit fly</name>
    <dbReference type="NCBI Taxonomy" id="7244"/>
    <lineage>
        <taxon>Eukaryota</taxon>
        <taxon>Metazoa</taxon>
        <taxon>Ecdysozoa</taxon>
        <taxon>Arthropoda</taxon>
        <taxon>Hexapoda</taxon>
        <taxon>Insecta</taxon>
        <taxon>Pterygota</taxon>
        <taxon>Neoptera</taxon>
        <taxon>Endopterygota</taxon>
        <taxon>Diptera</taxon>
        <taxon>Brachycera</taxon>
        <taxon>Muscomorpha</taxon>
        <taxon>Ephydroidea</taxon>
        <taxon>Drosophilidae</taxon>
        <taxon>Drosophila</taxon>
    </lineage>
</organism>
<gene>
    <name type="ORF">GJ21203</name>
</gene>
<name>CTU1_DROVI</name>
<evidence type="ECO:0000255" key="1">
    <source>
        <dbReference type="HAMAP-Rule" id="MF_03053"/>
    </source>
</evidence>
<proteinExistence type="inferred from homology"/>
<reference key="1">
    <citation type="journal article" date="2007" name="Nature">
        <title>Evolution of genes and genomes on the Drosophila phylogeny.</title>
        <authorList>
            <consortium name="Drosophila 12 genomes consortium"/>
        </authorList>
    </citation>
    <scope>NUCLEOTIDE SEQUENCE [LARGE SCALE GENOMIC DNA]</scope>
    <source>
        <strain>Tucson 15010-1051.87</strain>
    </source>
</reference>
<protein>
    <recommendedName>
        <fullName evidence="1">Cytoplasmic tRNA 2-thiolation protein 1</fullName>
        <ecNumber evidence="1">2.7.7.-</ecNumber>
    </recommendedName>
    <alternativeName>
        <fullName evidence="1">Cytoplasmic tRNA adenylyltransferase 1</fullName>
    </alternativeName>
</protein>